<protein>
    <recommendedName>
        <fullName evidence="1">Regulator of ribonuclease activity A</fullName>
    </recommendedName>
</protein>
<evidence type="ECO:0000255" key="1">
    <source>
        <dbReference type="HAMAP-Rule" id="MF_00471"/>
    </source>
</evidence>
<feature type="chain" id="PRO_0000209614" description="Regulator of ribonuclease activity A">
    <location>
        <begin position="1"/>
        <end position="161"/>
    </location>
</feature>
<dbReference type="EMBL" id="BX950851">
    <property type="protein sequence ID" value="CAG77161.1"/>
    <property type="molecule type" value="Genomic_DNA"/>
</dbReference>
<dbReference type="RefSeq" id="WP_011095733.1">
    <property type="nucleotide sequence ID" value="NC_004547.2"/>
</dbReference>
<dbReference type="SMR" id="Q6CZ89"/>
<dbReference type="STRING" id="218491.ECA4264"/>
<dbReference type="GeneID" id="57210936"/>
<dbReference type="KEGG" id="eca:ECA4264"/>
<dbReference type="PATRIC" id="fig|218491.5.peg.4341"/>
<dbReference type="eggNOG" id="COG0684">
    <property type="taxonomic scope" value="Bacteria"/>
</dbReference>
<dbReference type="HOGENOM" id="CLU_072626_4_0_6"/>
<dbReference type="OrthoDB" id="943692at2"/>
<dbReference type="Proteomes" id="UP000007966">
    <property type="component" value="Chromosome"/>
</dbReference>
<dbReference type="GO" id="GO:0005829">
    <property type="term" value="C:cytosol"/>
    <property type="evidence" value="ECO:0007669"/>
    <property type="project" value="TreeGrafter"/>
</dbReference>
<dbReference type="GO" id="GO:0060698">
    <property type="term" value="F:endoribonuclease inhibitor activity"/>
    <property type="evidence" value="ECO:0007669"/>
    <property type="project" value="UniProtKB-UniRule"/>
</dbReference>
<dbReference type="GO" id="GO:0019899">
    <property type="term" value="F:enzyme binding"/>
    <property type="evidence" value="ECO:0007669"/>
    <property type="project" value="UniProtKB-UniRule"/>
</dbReference>
<dbReference type="GO" id="GO:1902369">
    <property type="term" value="P:negative regulation of RNA catabolic process"/>
    <property type="evidence" value="ECO:0007669"/>
    <property type="project" value="TreeGrafter"/>
</dbReference>
<dbReference type="CDD" id="cd16841">
    <property type="entry name" value="RraA_family"/>
    <property type="match status" value="1"/>
</dbReference>
<dbReference type="Gene3D" id="3.50.30.40">
    <property type="entry name" value="Ribonuclease E inhibitor RraA/RraA-like"/>
    <property type="match status" value="1"/>
</dbReference>
<dbReference type="HAMAP" id="MF_00471">
    <property type="entry name" value="RraA"/>
    <property type="match status" value="1"/>
</dbReference>
<dbReference type="InterPro" id="IPR010203">
    <property type="entry name" value="RraA"/>
</dbReference>
<dbReference type="InterPro" id="IPR005493">
    <property type="entry name" value="RraA/RraA-like"/>
</dbReference>
<dbReference type="InterPro" id="IPR036704">
    <property type="entry name" value="RraA/RraA-like_sf"/>
</dbReference>
<dbReference type="InterPro" id="IPR014339">
    <property type="entry name" value="RraA_gpbac"/>
</dbReference>
<dbReference type="NCBIfam" id="TIGR01935">
    <property type="entry name" value="NOT-MenG"/>
    <property type="match status" value="1"/>
</dbReference>
<dbReference type="NCBIfam" id="NF006875">
    <property type="entry name" value="PRK09372.1"/>
    <property type="match status" value="1"/>
</dbReference>
<dbReference type="NCBIfam" id="TIGR02998">
    <property type="entry name" value="RraA_entero"/>
    <property type="match status" value="1"/>
</dbReference>
<dbReference type="PANTHER" id="PTHR33254">
    <property type="entry name" value="4-HYDROXY-4-METHYL-2-OXOGLUTARATE ALDOLASE 3-RELATED"/>
    <property type="match status" value="1"/>
</dbReference>
<dbReference type="PANTHER" id="PTHR33254:SF29">
    <property type="entry name" value="REGULATOR OF RIBONUCLEASE ACTIVITY A"/>
    <property type="match status" value="1"/>
</dbReference>
<dbReference type="Pfam" id="PF03737">
    <property type="entry name" value="RraA-like"/>
    <property type="match status" value="1"/>
</dbReference>
<dbReference type="SUPFAM" id="SSF89562">
    <property type="entry name" value="RraA-like"/>
    <property type="match status" value="1"/>
</dbReference>
<name>RRAA_PECAS</name>
<reference key="1">
    <citation type="journal article" date="2004" name="Proc. Natl. Acad. Sci. U.S.A.">
        <title>Genome sequence of the enterobacterial phytopathogen Erwinia carotovora subsp. atroseptica and characterization of virulence factors.</title>
        <authorList>
            <person name="Bell K.S."/>
            <person name="Sebaihia M."/>
            <person name="Pritchard L."/>
            <person name="Holden M.T.G."/>
            <person name="Hyman L.J."/>
            <person name="Holeva M.C."/>
            <person name="Thomson N.R."/>
            <person name="Bentley S.D."/>
            <person name="Churcher L.J.C."/>
            <person name="Mungall K."/>
            <person name="Atkin R."/>
            <person name="Bason N."/>
            <person name="Brooks K."/>
            <person name="Chillingworth T."/>
            <person name="Clark K."/>
            <person name="Doggett J."/>
            <person name="Fraser A."/>
            <person name="Hance Z."/>
            <person name="Hauser H."/>
            <person name="Jagels K."/>
            <person name="Moule S."/>
            <person name="Norbertczak H."/>
            <person name="Ormond D."/>
            <person name="Price C."/>
            <person name="Quail M.A."/>
            <person name="Sanders M."/>
            <person name="Walker D."/>
            <person name="Whitehead S."/>
            <person name="Salmond G.P.C."/>
            <person name="Birch P.R.J."/>
            <person name="Parkhill J."/>
            <person name="Toth I.K."/>
        </authorList>
    </citation>
    <scope>NUCLEOTIDE SEQUENCE [LARGE SCALE GENOMIC DNA]</scope>
    <source>
        <strain>SCRI 1043 / ATCC BAA-672</strain>
    </source>
</reference>
<comment type="function">
    <text evidence="1">Globally modulates RNA abundance by binding to RNase E (Rne) and regulating its endonucleolytic activity. Can modulate Rne action in a substrate-dependent manner by altering the composition of the degradosome. Modulates RNA-binding and helicase activities of the degradosome.</text>
</comment>
<comment type="subunit">
    <text evidence="1">Homotrimer. Binds to both RNA-binding sites in the C-terminal region of Rne and to RhlB.</text>
</comment>
<comment type="subcellular location">
    <subcellularLocation>
        <location evidence="1">Cytoplasm</location>
    </subcellularLocation>
</comment>
<comment type="similarity">
    <text evidence="1">Belongs to the RraA family.</text>
</comment>
<keyword id="KW-0963">Cytoplasm</keyword>
<keyword id="KW-1185">Reference proteome</keyword>
<gene>
    <name evidence="1" type="primary">rraA</name>
    <name type="ordered locus">ECA4264</name>
</gene>
<organism>
    <name type="scientific">Pectobacterium atrosepticum (strain SCRI 1043 / ATCC BAA-672)</name>
    <name type="common">Erwinia carotovora subsp. atroseptica</name>
    <dbReference type="NCBI Taxonomy" id="218491"/>
    <lineage>
        <taxon>Bacteria</taxon>
        <taxon>Pseudomonadati</taxon>
        <taxon>Pseudomonadota</taxon>
        <taxon>Gammaproteobacteria</taxon>
        <taxon>Enterobacterales</taxon>
        <taxon>Pectobacteriaceae</taxon>
        <taxon>Pectobacterium</taxon>
    </lineage>
</organism>
<sequence length="161" mass="17378">MKYDTSELCDIYHEEVNVVEPLFSNFGGRTSFGGKITTVKCFEDNGLLFDLFEENGLGRVLLIDGGGSVRRALINAELARLATQNEWEGIVVYGAVRQVDDLAELDIGIQAMAAIPVGAGSEGIGESDIRVNFGGVTFFSGDHLYADNTGIILSEDPLDIE</sequence>
<proteinExistence type="inferred from homology"/>
<accession>Q6CZ89</accession>